<organism>
    <name type="scientific">Campylobacter jejuni subsp. jejuni serotype O:23/36 (strain 81-176)</name>
    <dbReference type="NCBI Taxonomy" id="354242"/>
    <lineage>
        <taxon>Bacteria</taxon>
        <taxon>Pseudomonadati</taxon>
        <taxon>Campylobacterota</taxon>
        <taxon>Epsilonproteobacteria</taxon>
        <taxon>Campylobacterales</taxon>
        <taxon>Campylobacteraceae</taxon>
        <taxon>Campylobacter</taxon>
    </lineage>
</organism>
<evidence type="ECO:0000255" key="1">
    <source>
        <dbReference type="HAMAP-Rule" id="MF_00493"/>
    </source>
</evidence>
<keyword id="KW-0963">Cytoplasm</keyword>
<keyword id="KW-0570">Pentose shunt</keyword>
<keyword id="KW-0704">Schiff base</keyword>
<keyword id="KW-0808">Transferase</keyword>
<feature type="chain" id="PRO_1000026521" description="Transaldolase">
    <location>
        <begin position="1"/>
        <end position="325"/>
    </location>
</feature>
<feature type="active site" description="Schiff-base intermediate with substrate" evidence="1">
    <location>
        <position position="125"/>
    </location>
</feature>
<protein>
    <recommendedName>
        <fullName evidence="1">Transaldolase</fullName>
        <ecNumber evidence="1">2.2.1.2</ecNumber>
    </recommendedName>
</protein>
<sequence>MKNFSLWCDFIENSFLDNEFLNLLSHGINGATSNPAIFKNAILNSPIYKDKILKLKGKKTKDIYEELAISDIQKAADKLAPLFYQKNDGFISIEIDPRLHDNTTLSLGEAKRLYSAISKENVMIKIPATKASYEVMYELMKNGISVNATLIFSLEQSQKCFEALNAGLVEFRKNNIALKEQNTRTPQAVISIFVSRFDRLLNPKAKEQNRIGILNANLAYNNIYSKNEPNIRALFASTGVKGDDLPKDYYIKELLFENSVNTAPLDAIEAFKGKMHFKKPLMNFEIYTELNQIISQSEREKACNDLLSDGLEQFCIAFEDILKAL</sequence>
<reference key="1">
    <citation type="submission" date="2006-12" db="EMBL/GenBank/DDBJ databases">
        <authorList>
            <person name="Fouts D.E."/>
            <person name="Nelson K.E."/>
            <person name="Sebastian Y."/>
        </authorList>
    </citation>
    <scope>NUCLEOTIDE SEQUENCE [LARGE SCALE GENOMIC DNA]</scope>
    <source>
        <strain>81-176</strain>
    </source>
</reference>
<name>TAL_CAMJJ</name>
<comment type="function">
    <text evidence="1">Transaldolase is important for the balance of metabolites in the pentose-phosphate pathway.</text>
</comment>
<comment type="catalytic activity">
    <reaction evidence="1">
        <text>D-sedoheptulose 7-phosphate + D-glyceraldehyde 3-phosphate = D-erythrose 4-phosphate + beta-D-fructose 6-phosphate</text>
        <dbReference type="Rhea" id="RHEA:17053"/>
        <dbReference type="ChEBI" id="CHEBI:16897"/>
        <dbReference type="ChEBI" id="CHEBI:57483"/>
        <dbReference type="ChEBI" id="CHEBI:57634"/>
        <dbReference type="ChEBI" id="CHEBI:59776"/>
        <dbReference type="EC" id="2.2.1.2"/>
    </reaction>
</comment>
<comment type="pathway">
    <text evidence="1">Carbohydrate degradation; pentose phosphate pathway; D-glyceraldehyde 3-phosphate and beta-D-fructose 6-phosphate from D-ribose 5-phosphate and D-xylulose 5-phosphate (non-oxidative stage): step 2/3.</text>
</comment>
<comment type="subcellular location">
    <subcellularLocation>
        <location evidence="1">Cytoplasm</location>
    </subcellularLocation>
</comment>
<comment type="similarity">
    <text evidence="1">Belongs to the transaldolase family. Type 2 subfamily.</text>
</comment>
<accession>A1VY04</accession>
<dbReference type="EC" id="2.2.1.2" evidence="1"/>
<dbReference type="EMBL" id="CP000538">
    <property type="protein sequence ID" value="EAQ73014.1"/>
    <property type="molecule type" value="Genomic_DNA"/>
</dbReference>
<dbReference type="RefSeq" id="WP_002857444.1">
    <property type="nucleotide sequence ID" value="NC_008787.1"/>
</dbReference>
<dbReference type="SMR" id="A1VY04"/>
<dbReference type="KEGG" id="cjj:CJJ81176_0307"/>
<dbReference type="eggNOG" id="COG0176">
    <property type="taxonomic scope" value="Bacteria"/>
</dbReference>
<dbReference type="HOGENOM" id="CLU_050771_1_0_7"/>
<dbReference type="UniPathway" id="UPA00115">
    <property type="reaction ID" value="UER00414"/>
</dbReference>
<dbReference type="Proteomes" id="UP000000646">
    <property type="component" value="Chromosome"/>
</dbReference>
<dbReference type="GO" id="GO:0005737">
    <property type="term" value="C:cytoplasm"/>
    <property type="evidence" value="ECO:0007669"/>
    <property type="project" value="UniProtKB-SubCell"/>
</dbReference>
<dbReference type="GO" id="GO:0004801">
    <property type="term" value="F:transaldolase activity"/>
    <property type="evidence" value="ECO:0007669"/>
    <property type="project" value="UniProtKB-UniRule"/>
</dbReference>
<dbReference type="GO" id="GO:0005975">
    <property type="term" value="P:carbohydrate metabolic process"/>
    <property type="evidence" value="ECO:0007669"/>
    <property type="project" value="InterPro"/>
</dbReference>
<dbReference type="GO" id="GO:0006098">
    <property type="term" value="P:pentose-phosphate shunt"/>
    <property type="evidence" value="ECO:0007669"/>
    <property type="project" value="UniProtKB-UniRule"/>
</dbReference>
<dbReference type="CDD" id="cd00955">
    <property type="entry name" value="Transaldolase_like"/>
    <property type="match status" value="1"/>
</dbReference>
<dbReference type="Gene3D" id="3.20.20.70">
    <property type="entry name" value="Aldolase class I"/>
    <property type="match status" value="1"/>
</dbReference>
<dbReference type="HAMAP" id="MF_00493">
    <property type="entry name" value="Transaldolase_2"/>
    <property type="match status" value="1"/>
</dbReference>
<dbReference type="InterPro" id="IPR013785">
    <property type="entry name" value="Aldolase_TIM"/>
</dbReference>
<dbReference type="InterPro" id="IPR001585">
    <property type="entry name" value="TAL/FSA"/>
</dbReference>
<dbReference type="InterPro" id="IPR004732">
    <property type="entry name" value="Transaldolase_2"/>
</dbReference>
<dbReference type="InterPro" id="IPR018225">
    <property type="entry name" value="Transaldolase_AS"/>
</dbReference>
<dbReference type="NCBIfam" id="NF003026">
    <property type="entry name" value="PRK03903.1"/>
    <property type="match status" value="1"/>
</dbReference>
<dbReference type="NCBIfam" id="TIGR00876">
    <property type="entry name" value="tal_mycobact"/>
    <property type="match status" value="1"/>
</dbReference>
<dbReference type="PANTHER" id="PTHR10683">
    <property type="entry name" value="TRANSALDOLASE"/>
    <property type="match status" value="1"/>
</dbReference>
<dbReference type="PANTHER" id="PTHR10683:SF31">
    <property type="entry name" value="TRANSALDOLASE"/>
    <property type="match status" value="1"/>
</dbReference>
<dbReference type="Pfam" id="PF00923">
    <property type="entry name" value="TAL_FSA"/>
    <property type="match status" value="1"/>
</dbReference>
<dbReference type="PIRSF" id="PIRSF036915">
    <property type="entry name" value="Trnald_Bac_Plnt"/>
    <property type="match status" value="1"/>
</dbReference>
<dbReference type="SUPFAM" id="SSF51569">
    <property type="entry name" value="Aldolase"/>
    <property type="match status" value="1"/>
</dbReference>
<dbReference type="PROSITE" id="PS01054">
    <property type="entry name" value="TRANSALDOLASE_1"/>
    <property type="match status" value="1"/>
</dbReference>
<gene>
    <name evidence="1" type="primary">tal</name>
    <name type="ordered locus">CJJ81176_0307</name>
</gene>
<proteinExistence type="inferred from homology"/>